<sequence>MSKFVVKPTNSLSGCLKVPGDKSISHRSIMLGSLANGVTKISGFLEGEDTLSTLKAFQDMGVKIEYNGDNVTIYGVGLNGLKKPLTPLDLGNSGTSIRLISGILAAQKFDSELCGDESLSKRPMGRVINPLTKMGAMIESNNGKLPLKIKGGQALNGIHYDLLVASAQVKSCVLLAGLYAKGETCIKELAPTRDHTERMLKGFGYKIDVNKNKICLIGGTQLNAFAIQVPSDISSAAFFMVAASIAPKADITLTGVNINPTRIGVIDILKLMGANLSLSNEREIGGELLADIRIQSEQLKGIRIPEELVSLAIDELPVIFIAASCAKGETILTDAKELRVKESDRIQVMADGLSILGIKNEVLEDGIKIQGGVFSKPGIVIESHHDHRISMSFAIASLRCQYIIEIEDVDNVKTSFPNFVELANQIGMNINLVNS</sequence>
<dbReference type="EC" id="2.5.1.19" evidence="1"/>
<dbReference type="EMBL" id="CP000488">
    <property type="protein sequence ID" value="ABL02372.1"/>
    <property type="molecule type" value="Genomic_DNA"/>
</dbReference>
<dbReference type="RefSeq" id="WP_011737997.1">
    <property type="nucleotide sequence ID" value="NC_008610.1"/>
</dbReference>
<dbReference type="SMR" id="A1AWR5"/>
<dbReference type="STRING" id="413404.Rmag_0623"/>
<dbReference type="KEGG" id="rma:Rmag_0623"/>
<dbReference type="eggNOG" id="COG0128">
    <property type="taxonomic scope" value="Bacteria"/>
</dbReference>
<dbReference type="HOGENOM" id="CLU_024321_0_1_6"/>
<dbReference type="UniPathway" id="UPA00053">
    <property type="reaction ID" value="UER00089"/>
</dbReference>
<dbReference type="Proteomes" id="UP000002587">
    <property type="component" value="Chromosome"/>
</dbReference>
<dbReference type="GO" id="GO:0005737">
    <property type="term" value="C:cytoplasm"/>
    <property type="evidence" value="ECO:0007669"/>
    <property type="project" value="UniProtKB-SubCell"/>
</dbReference>
<dbReference type="GO" id="GO:0003866">
    <property type="term" value="F:3-phosphoshikimate 1-carboxyvinyltransferase activity"/>
    <property type="evidence" value="ECO:0007669"/>
    <property type="project" value="UniProtKB-UniRule"/>
</dbReference>
<dbReference type="GO" id="GO:0008652">
    <property type="term" value="P:amino acid biosynthetic process"/>
    <property type="evidence" value="ECO:0007669"/>
    <property type="project" value="UniProtKB-KW"/>
</dbReference>
<dbReference type="GO" id="GO:0009073">
    <property type="term" value="P:aromatic amino acid family biosynthetic process"/>
    <property type="evidence" value="ECO:0007669"/>
    <property type="project" value="UniProtKB-KW"/>
</dbReference>
<dbReference type="GO" id="GO:0009423">
    <property type="term" value="P:chorismate biosynthetic process"/>
    <property type="evidence" value="ECO:0007669"/>
    <property type="project" value="UniProtKB-UniRule"/>
</dbReference>
<dbReference type="CDD" id="cd01556">
    <property type="entry name" value="EPSP_synthase"/>
    <property type="match status" value="1"/>
</dbReference>
<dbReference type="FunFam" id="3.65.10.10:FF:000005">
    <property type="entry name" value="3-phosphoshikimate 1-carboxyvinyltransferase"/>
    <property type="match status" value="1"/>
</dbReference>
<dbReference type="FunFam" id="3.65.10.10:FF:000006">
    <property type="entry name" value="3-phosphoshikimate 1-carboxyvinyltransferase"/>
    <property type="match status" value="1"/>
</dbReference>
<dbReference type="Gene3D" id="3.65.10.10">
    <property type="entry name" value="Enolpyruvate transferase domain"/>
    <property type="match status" value="2"/>
</dbReference>
<dbReference type="HAMAP" id="MF_00210">
    <property type="entry name" value="EPSP_synth"/>
    <property type="match status" value="1"/>
</dbReference>
<dbReference type="InterPro" id="IPR001986">
    <property type="entry name" value="Enolpyruvate_Tfrase_dom"/>
</dbReference>
<dbReference type="InterPro" id="IPR036968">
    <property type="entry name" value="Enolpyruvate_Tfrase_sf"/>
</dbReference>
<dbReference type="InterPro" id="IPR006264">
    <property type="entry name" value="EPSP_synthase"/>
</dbReference>
<dbReference type="InterPro" id="IPR023193">
    <property type="entry name" value="EPSP_synthase_CS"/>
</dbReference>
<dbReference type="InterPro" id="IPR013792">
    <property type="entry name" value="RNA3'P_cycl/enolpyr_Trfase_a/b"/>
</dbReference>
<dbReference type="NCBIfam" id="TIGR01356">
    <property type="entry name" value="aroA"/>
    <property type="match status" value="1"/>
</dbReference>
<dbReference type="PANTHER" id="PTHR21090">
    <property type="entry name" value="AROM/DEHYDROQUINATE SYNTHASE"/>
    <property type="match status" value="1"/>
</dbReference>
<dbReference type="PANTHER" id="PTHR21090:SF5">
    <property type="entry name" value="PENTAFUNCTIONAL AROM POLYPEPTIDE"/>
    <property type="match status" value="1"/>
</dbReference>
<dbReference type="Pfam" id="PF00275">
    <property type="entry name" value="EPSP_synthase"/>
    <property type="match status" value="1"/>
</dbReference>
<dbReference type="PIRSF" id="PIRSF000505">
    <property type="entry name" value="EPSPS"/>
    <property type="match status" value="1"/>
</dbReference>
<dbReference type="SUPFAM" id="SSF55205">
    <property type="entry name" value="EPT/RTPC-like"/>
    <property type="match status" value="1"/>
</dbReference>
<dbReference type="PROSITE" id="PS00104">
    <property type="entry name" value="EPSP_SYNTHASE_1"/>
    <property type="match status" value="1"/>
</dbReference>
<dbReference type="PROSITE" id="PS00885">
    <property type="entry name" value="EPSP_SYNTHASE_2"/>
    <property type="match status" value="1"/>
</dbReference>
<reference key="1">
    <citation type="journal article" date="2007" name="Science">
        <title>The Calyptogena magnifica chemoautotrophic symbiont genome.</title>
        <authorList>
            <person name="Newton I.L.G."/>
            <person name="Woyke T."/>
            <person name="Auchtung T.A."/>
            <person name="Dilly G.F."/>
            <person name="Dutton R.J."/>
            <person name="Fisher M.C."/>
            <person name="Fontanez K.M."/>
            <person name="Lau E."/>
            <person name="Stewart F.J."/>
            <person name="Richardson P.M."/>
            <person name="Barry K.W."/>
            <person name="Saunders E."/>
            <person name="Detter J.C."/>
            <person name="Wu D."/>
            <person name="Eisen J.A."/>
            <person name="Cavanaugh C.M."/>
        </authorList>
    </citation>
    <scope>NUCLEOTIDE SEQUENCE [LARGE SCALE GENOMIC DNA]</scope>
</reference>
<protein>
    <recommendedName>
        <fullName evidence="1">3-phosphoshikimate 1-carboxyvinyltransferase</fullName>
        <ecNumber evidence="1">2.5.1.19</ecNumber>
    </recommendedName>
    <alternativeName>
        <fullName evidence="1">5-enolpyruvylshikimate-3-phosphate synthase</fullName>
        <shortName evidence="1">EPSP synthase</shortName>
        <shortName evidence="1">EPSPS</shortName>
    </alternativeName>
</protein>
<accession>A1AWR5</accession>
<name>AROA_RUTMC</name>
<feature type="chain" id="PRO_0000325380" description="3-phosphoshikimate 1-carboxyvinyltransferase">
    <location>
        <begin position="1"/>
        <end position="435"/>
    </location>
</feature>
<feature type="active site" description="Proton acceptor" evidence="1">
    <location>
        <position position="314"/>
    </location>
</feature>
<feature type="binding site" evidence="1">
    <location>
        <position position="22"/>
    </location>
    <ligand>
        <name>3-phosphoshikimate</name>
        <dbReference type="ChEBI" id="CHEBI:145989"/>
    </ligand>
</feature>
<feature type="binding site" evidence="1">
    <location>
        <position position="22"/>
    </location>
    <ligand>
        <name>phosphoenolpyruvate</name>
        <dbReference type="ChEBI" id="CHEBI:58702"/>
    </ligand>
</feature>
<feature type="binding site" evidence="1">
    <location>
        <position position="23"/>
    </location>
    <ligand>
        <name>3-phosphoshikimate</name>
        <dbReference type="ChEBI" id="CHEBI:145989"/>
    </ligand>
</feature>
<feature type="binding site" evidence="1">
    <location>
        <position position="27"/>
    </location>
    <ligand>
        <name>3-phosphoshikimate</name>
        <dbReference type="ChEBI" id="CHEBI:145989"/>
    </ligand>
</feature>
<feature type="binding site" evidence="1">
    <location>
        <position position="94"/>
    </location>
    <ligand>
        <name>phosphoenolpyruvate</name>
        <dbReference type="ChEBI" id="CHEBI:58702"/>
    </ligand>
</feature>
<feature type="binding site" evidence="1">
    <location>
        <position position="122"/>
    </location>
    <ligand>
        <name>phosphoenolpyruvate</name>
        <dbReference type="ChEBI" id="CHEBI:58702"/>
    </ligand>
</feature>
<feature type="binding site" evidence="1">
    <location>
        <position position="166"/>
    </location>
    <ligand>
        <name>3-phosphoshikimate</name>
        <dbReference type="ChEBI" id="CHEBI:145989"/>
    </ligand>
</feature>
<feature type="binding site" evidence="1">
    <location>
        <position position="168"/>
    </location>
    <ligand>
        <name>3-phosphoshikimate</name>
        <dbReference type="ChEBI" id="CHEBI:145989"/>
    </ligand>
</feature>
<feature type="binding site" evidence="1">
    <location>
        <position position="168"/>
    </location>
    <ligand>
        <name>phosphoenolpyruvate</name>
        <dbReference type="ChEBI" id="CHEBI:58702"/>
    </ligand>
</feature>
<feature type="binding site" evidence="1">
    <location>
        <position position="314"/>
    </location>
    <ligand>
        <name>3-phosphoshikimate</name>
        <dbReference type="ChEBI" id="CHEBI:145989"/>
    </ligand>
</feature>
<feature type="binding site" evidence="1">
    <location>
        <position position="341"/>
    </location>
    <ligand>
        <name>3-phosphoshikimate</name>
        <dbReference type="ChEBI" id="CHEBI:145989"/>
    </ligand>
</feature>
<feature type="binding site" evidence="1">
    <location>
        <position position="345"/>
    </location>
    <ligand>
        <name>phosphoenolpyruvate</name>
        <dbReference type="ChEBI" id="CHEBI:58702"/>
    </ligand>
</feature>
<feature type="binding site" evidence="1">
    <location>
        <position position="388"/>
    </location>
    <ligand>
        <name>phosphoenolpyruvate</name>
        <dbReference type="ChEBI" id="CHEBI:58702"/>
    </ligand>
</feature>
<proteinExistence type="inferred from homology"/>
<organism>
    <name type="scientific">Ruthia magnifica subsp. Calyptogena magnifica</name>
    <dbReference type="NCBI Taxonomy" id="413404"/>
    <lineage>
        <taxon>Bacteria</taxon>
        <taxon>Pseudomonadati</taxon>
        <taxon>Pseudomonadota</taxon>
        <taxon>Gammaproteobacteria</taxon>
        <taxon>Candidatus Pseudothioglobaceae</taxon>
        <taxon>Candidatus Ruthturnera</taxon>
    </lineage>
</organism>
<comment type="function">
    <text evidence="1">Catalyzes the transfer of the enolpyruvyl moiety of phosphoenolpyruvate (PEP) to the 5-hydroxyl of shikimate-3-phosphate (S3P) to produce enolpyruvyl shikimate-3-phosphate and inorganic phosphate.</text>
</comment>
<comment type="catalytic activity">
    <reaction evidence="1">
        <text>3-phosphoshikimate + phosphoenolpyruvate = 5-O-(1-carboxyvinyl)-3-phosphoshikimate + phosphate</text>
        <dbReference type="Rhea" id="RHEA:21256"/>
        <dbReference type="ChEBI" id="CHEBI:43474"/>
        <dbReference type="ChEBI" id="CHEBI:57701"/>
        <dbReference type="ChEBI" id="CHEBI:58702"/>
        <dbReference type="ChEBI" id="CHEBI:145989"/>
        <dbReference type="EC" id="2.5.1.19"/>
    </reaction>
    <physiologicalReaction direction="left-to-right" evidence="1">
        <dbReference type="Rhea" id="RHEA:21257"/>
    </physiologicalReaction>
</comment>
<comment type="pathway">
    <text evidence="1">Metabolic intermediate biosynthesis; chorismate biosynthesis; chorismate from D-erythrose 4-phosphate and phosphoenolpyruvate: step 6/7.</text>
</comment>
<comment type="subunit">
    <text evidence="1">Monomer.</text>
</comment>
<comment type="subcellular location">
    <subcellularLocation>
        <location evidence="1">Cytoplasm</location>
    </subcellularLocation>
</comment>
<comment type="similarity">
    <text evidence="1">Belongs to the EPSP synthase family.</text>
</comment>
<evidence type="ECO:0000255" key="1">
    <source>
        <dbReference type="HAMAP-Rule" id="MF_00210"/>
    </source>
</evidence>
<gene>
    <name evidence="1" type="primary">aroA</name>
    <name type="ordered locus">Rmag_0623</name>
</gene>
<keyword id="KW-0028">Amino-acid biosynthesis</keyword>
<keyword id="KW-0057">Aromatic amino acid biosynthesis</keyword>
<keyword id="KW-0963">Cytoplasm</keyword>
<keyword id="KW-0808">Transferase</keyword>